<reference key="1">
    <citation type="journal article" date="2002" name="Nature">
        <title>The genome sequence of Schizosaccharomyces pombe.</title>
        <authorList>
            <person name="Wood V."/>
            <person name="Gwilliam R."/>
            <person name="Rajandream M.A."/>
            <person name="Lyne M.H."/>
            <person name="Lyne R."/>
            <person name="Stewart A."/>
            <person name="Sgouros J.G."/>
            <person name="Peat N."/>
            <person name="Hayles J."/>
            <person name="Baker S.G."/>
            <person name="Basham D."/>
            <person name="Bowman S."/>
            <person name="Brooks K."/>
            <person name="Brown D."/>
            <person name="Brown S."/>
            <person name="Chillingworth T."/>
            <person name="Churcher C.M."/>
            <person name="Collins M."/>
            <person name="Connor R."/>
            <person name="Cronin A."/>
            <person name="Davis P."/>
            <person name="Feltwell T."/>
            <person name="Fraser A."/>
            <person name="Gentles S."/>
            <person name="Goble A."/>
            <person name="Hamlin N."/>
            <person name="Harris D.E."/>
            <person name="Hidalgo J."/>
            <person name="Hodgson G."/>
            <person name="Holroyd S."/>
            <person name="Hornsby T."/>
            <person name="Howarth S."/>
            <person name="Huckle E.J."/>
            <person name="Hunt S."/>
            <person name="Jagels K."/>
            <person name="James K.D."/>
            <person name="Jones L."/>
            <person name="Jones M."/>
            <person name="Leather S."/>
            <person name="McDonald S."/>
            <person name="McLean J."/>
            <person name="Mooney P."/>
            <person name="Moule S."/>
            <person name="Mungall K.L."/>
            <person name="Murphy L.D."/>
            <person name="Niblett D."/>
            <person name="Odell C."/>
            <person name="Oliver K."/>
            <person name="O'Neil S."/>
            <person name="Pearson D."/>
            <person name="Quail M.A."/>
            <person name="Rabbinowitsch E."/>
            <person name="Rutherford K.M."/>
            <person name="Rutter S."/>
            <person name="Saunders D."/>
            <person name="Seeger K."/>
            <person name="Sharp S."/>
            <person name="Skelton J."/>
            <person name="Simmonds M.N."/>
            <person name="Squares R."/>
            <person name="Squares S."/>
            <person name="Stevens K."/>
            <person name="Taylor K."/>
            <person name="Taylor R.G."/>
            <person name="Tivey A."/>
            <person name="Walsh S.V."/>
            <person name="Warren T."/>
            <person name="Whitehead S."/>
            <person name="Woodward J.R."/>
            <person name="Volckaert G."/>
            <person name="Aert R."/>
            <person name="Robben J."/>
            <person name="Grymonprez B."/>
            <person name="Weltjens I."/>
            <person name="Vanstreels E."/>
            <person name="Rieger M."/>
            <person name="Schaefer M."/>
            <person name="Mueller-Auer S."/>
            <person name="Gabel C."/>
            <person name="Fuchs M."/>
            <person name="Duesterhoeft A."/>
            <person name="Fritzc C."/>
            <person name="Holzer E."/>
            <person name="Moestl D."/>
            <person name="Hilbert H."/>
            <person name="Borzym K."/>
            <person name="Langer I."/>
            <person name="Beck A."/>
            <person name="Lehrach H."/>
            <person name="Reinhardt R."/>
            <person name="Pohl T.M."/>
            <person name="Eger P."/>
            <person name="Zimmermann W."/>
            <person name="Wedler H."/>
            <person name="Wambutt R."/>
            <person name="Purnelle B."/>
            <person name="Goffeau A."/>
            <person name="Cadieu E."/>
            <person name="Dreano S."/>
            <person name="Gloux S."/>
            <person name="Lelaure V."/>
            <person name="Mottier S."/>
            <person name="Galibert F."/>
            <person name="Aves S.J."/>
            <person name="Xiang Z."/>
            <person name="Hunt C."/>
            <person name="Moore K."/>
            <person name="Hurst S.M."/>
            <person name="Lucas M."/>
            <person name="Rochet M."/>
            <person name="Gaillardin C."/>
            <person name="Tallada V.A."/>
            <person name="Garzon A."/>
            <person name="Thode G."/>
            <person name="Daga R.R."/>
            <person name="Cruzado L."/>
            <person name="Jimenez J."/>
            <person name="Sanchez M."/>
            <person name="del Rey F."/>
            <person name="Benito J."/>
            <person name="Dominguez A."/>
            <person name="Revuelta J.L."/>
            <person name="Moreno S."/>
            <person name="Armstrong J."/>
            <person name="Forsburg S.L."/>
            <person name="Cerutti L."/>
            <person name="Lowe T."/>
            <person name="McCombie W.R."/>
            <person name="Paulsen I."/>
            <person name="Potashkin J."/>
            <person name="Shpakovski G.V."/>
            <person name="Ussery D."/>
            <person name="Barrell B.G."/>
            <person name="Nurse P."/>
        </authorList>
    </citation>
    <scope>NUCLEOTIDE SEQUENCE [LARGE SCALE GENOMIC DNA]</scope>
    <source>
        <strain>972 / ATCC 24843</strain>
    </source>
</reference>
<keyword id="KW-0333">Golgi apparatus</keyword>
<keyword id="KW-0653">Protein transport</keyword>
<keyword id="KW-1185">Reference proteome</keyword>
<keyword id="KW-0813">Transport</keyword>
<dbReference type="EMBL" id="CU329670">
    <property type="protein sequence ID" value="CAA94623.1"/>
    <property type="molecule type" value="Genomic_DNA"/>
</dbReference>
<dbReference type="PIR" id="T38076">
    <property type="entry name" value="T38076"/>
</dbReference>
<dbReference type="SMR" id="Q10410"/>
<dbReference type="BioGRID" id="277971">
    <property type="interactions" value="4"/>
</dbReference>
<dbReference type="FunCoup" id="Q10410">
    <property type="interactions" value="108"/>
</dbReference>
<dbReference type="STRING" id="284812.Q10410"/>
<dbReference type="iPTMnet" id="Q10410"/>
<dbReference type="SwissPalm" id="Q10410"/>
<dbReference type="PaxDb" id="4896-SPAC1F3.05.1"/>
<dbReference type="EnsemblFungi" id="SPAC1F3.05.1">
    <property type="protein sequence ID" value="SPAC1F3.05.1:pep"/>
    <property type="gene ID" value="SPAC1F3.05"/>
</dbReference>
<dbReference type="KEGG" id="spo:2541469"/>
<dbReference type="PomBase" id="SPAC1F3.05"/>
<dbReference type="VEuPathDB" id="FungiDB:SPAC1F3.05"/>
<dbReference type="eggNOG" id="KOG1087">
    <property type="taxonomic scope" value="Eukaryota"/>
</dbReference>
<dbReference type="HOGENOM" id="CLU_017092_0_0_1"/>
<dbReference type="InParanoid" id="Q10410"/>
<dbReference type="OMA" id="LEEWNYM"/>
<dbReference type="PhylomeDB" id="Q10410"/>
<dbReference type="PRO" id="PR:Q10410"/>
<dbReference type="Proteomes" id="UP000002485">
    <property type="component" value="Chromosome I"/>
</dbReference>
<dbReference type="GO" id="GO:0005829">
    <property type="term" value="C:cytosol"/>
    <property type="evidence" value="ECO:0007005"/>
    <property type="project" value="PomBase"/>
</dbReference>
<dbReference type="GO" id="GO:0005794">
    <property type="term" value="C:Golgi apparatus"/>
    <property type="evidence" value="ECO:0007005"/>
    <property type="project" value="PomBase"/>
</dbReference>
<dbReference type="GO" id="GO:0005634">
    <property type="term" value="C:nucleus"/>
    <property type="evidence" value="ECO:0007005"/>
    <property type="project" value="PomBase"/>
</dbReference>
<dbReference type="GO" id="GO:0005802">
    <property type="term" value="C:trans-Golgi network"/>
    <property type="evidence" value="ECO:0000318"/>
    <property type="project" value="GO_Central"/>
</dbReference>
<dbReference type="GO" id="GO:0035091">
    <property type="term" value="F:phosphatidylinositol binding"/>
    <property type="evidence" value="ECO:0007669"/>
    <property type="project" value="InterPro"/>
</dbReference>
<dbReference type="GO" id="GO:0043130">
    <property type="term" value="F:ubiquitin binding"/>
    <property type="evidence" value="ECO:0000318"/>
    <property type="project" value="GO_Central"/>
</dbReference>
<dbReference type="GO" id="GO:0006895">
    <property type="term" value="P:Golgi to endosome transport"/>
    <property type="evidence" value="ECO:0000315"/>
    <property type="project" value="PomBase"/>
</dbReference>
<dbReference type="GO" id="GO:0006896">
    <property type="term" value="P:Golgi to vacuole transport"/>
    <property type="evidence" value="ECO:0000315"/>
    <property type="project" value="PomBase"/>
</dbReference>
<dbReference type="GO" id="GO:0043328">
    <property type="term" value="P:protein transport to vacuole involved in ubiquitin-dependent protein catabolic process via the multivesicular body sorting pathway"/>
    <property type="evidence" value="ECO:0000318"/>
    <property type="project" value="GO_Central"/>
</dbReference>
<dbReference type="GO" id="GO:0042147">
    <property type="term" value="P:retrograde transport, endosome to Golgi"/>
    <property type="evidence" value="ECO:0000315"/>
    <property type="project" value="PomBase"/>
</dbReference>
<dbReference type="CDD" id="cd14235">
    <property type="entry name" value="GAT_GGA_fungi"/>
    <property type="match status" value="1"/>
</dbReference>
<dbReference type="CDD" id="cd16998">
    <property type="entry name" value="VHS_GGA_fungi"/>
    <property type="match status" value="1"/>
</dbReference>
<dbReference type="FunFam" id="1.25.40.90:FF:000008">
    <property type="entry name" value="VHS domain protein"/>
    <property type="match status" value="1"/>
</dbReference>
<dbReference type="Gene3D" id="1.20.58.160">
    <property type="match status" value="1"/>
</dbReference>
<dbReference type="Gene3D" id="1.25.40.90">
    <property type="match status" value="1"/>
</dbReference>
<dbReference type="Gene3D" id="2.60.40.1230">
    <property type="match status" value="1"/>
</dbReference>
<dbReference type="InterPro" id="IPR052653">
    <property type="entry name" value="ARF-binding"/>
</dbReference>
<dbReference type="InterPro" id="IPR008152">
    <property type="entry name" value="Clathrin_a/b/g-adaptin_app_Ig"/>
</dbReference>
<dbReference type="InterPro" id="IPR013041">
    <property type="entry name" value="Clathrin_app_Ig-like_sf"/>
</dbReference>
<dbReference type="InterPro" id="IPR008942">
    <property type="entry name" value="ENTH_VHS"/>
</dbReference>
<dbReference type="InterPro" id="IPR008153">
    <property type="entry name" value="GAE_dom"/>
</dbReference>
<dbReference type="InterPro" id="IPR004152">
    <property type="entry name" value="GAT_dom"/>
</dbReference>
<dbReference type="InterPro" id="IPR038425">
    <property type="entry name" value="GAT_sf"/>
</dbReference>
<dbReference type="InterPro" id="IPR002014">
    <property type="entry name" value="VHS_dom"/>
</dbReference>
<dbReference type="PANTHER" id="PTHR47180:SF2">
    <property type="entry name" value="ADP-RIBOSYLATION FACTOR-BINDING PROTEIN C1F3.05-RELATED"/>
    <property type="match status" value="1"/>
</dbReference>
<dbReference type="PANTHER" id="PTHR47180">
    <property type="entry name" value="ADP-RIBOSYLATION FACTOR-BINDING PROTEIN GGA1-RELATED"/>
    <property type="match status" value="1"/>
</dbReference>
<dbReference type="Pfam" id="PF02883">
    <property type="entry name" value="Alpha_adaptinC2"/>
    <property type="match status" value="1"/>
</dbReference>
<dbReference type="Pfam" id="PF00790">
    <property type="entry name" value="VHS"/>
    <property type="match status" value="1"/>
</dbReference>
<dbReference type="SMART" id="SM00809">
    <property type="entry name" value="Alpha_adaptinC2"/>
    <property type="match status" value="1"/>
</dbReference>
<dbReference type="SMART" id="SM00288">
    <property type="entry name" value="VHS"/>
    <property type="match status" value="1"/>
</dbReference>
<dbReference type="SUPFAM" id="SSF49348">
    <property type="entry name" value="Clathrin adaptor appendage domain"/>
    <property type="match status" value="1"/>
</dbReference>
<dbReference type="SUPFAM" id="SSF48464">
    <property type="entry name" value="ENTH/VHS domain"/>
    <property type="match status" value="1"/>
</dbReference>
<dbReference type="SUPFAM" id="SSF89009">
    <property type="entry name" value="GAT-like domain"/>
    <property type="match status" value="1"/>
</dbReference>
<dbReference type="PROSITE" id="PS50180">
    <property type="entry name" value="GAE"/>
    <property type="match status" value="1"/>
</dbReference>
<dbReference type="PROSITE" id="PS50909">
    <property type="entry name" value="GAT"/>
    <property type="match status" value="1"/>
</dbReference>
<dbReference type="PROSITE" id="PS50179">
    <property type="entry name" value="VHS"/>
    <property type="match status" value="1"/>
</dbReference>
<gene>
    <name type="ORF">SPAC1F3.05</name>
</gene>
<evidence type="ECO:0000250" key="1"/>
<evidence type="ECO:0000255" key="2">
    <source>
        <dbReference type="PROSITE-ProRule" id="PRU00093"/>
    </source>
</evidence>
<evidence type="ECO:0000255" key="3">
    <source>
        <dbReference type="PROSITE-ProRule" id="PRU00218"/>
    </source>
</evidence>
<evidence type="ECO:0000255" key="4">
    <source>
        <dbReference type="PROSITE-ProRule" id="PRU00373"/>
    </source>
</evidence>
<proteinExistence type="inferred from homology"/>
<sequence length="510" mass="56789">MRSSQTLSKYIDKATDQFNLEPNLALNIEIADLINEKKGNTPREAALLILKRVNSANPTVSYLALHLLDICVKNCGYPFHFQIASEEFLNGFVSRFPNHPISRMNKIQSKMLEMLEEWNYMLCKNNRHREDFSRIHDIRELMAFRGYKFPAVDEDSIAVMKPNNSLRSAQELAREDLEAHKAKLQELLRRGTPMDLAEANALMKVIAGYDEENTEDYSALAAADLESIRSKALRVKQFLVNQTVSLEEGTLADAVESLKVYQTKIARILREENEDEYYVQKLLSLNDLLINVIEECSNSDLIHSGTNVVSSQPNVVESHVPPSSNDTKQESSLIDLMKLTEEPAVPSPSLPTNVPANQSLSMLSSLSNSMSSTSNGALNSPSYSQAAIPNTNSSLTSILQSDSLMISTQLTSVQKSSGFASYSVQFSNCSLTWPVSEVVFQVAVVKSLKLQLLPHTGDAIIAPGKQNAAHEIMNITNIPADASDLRIRWRVQWIIGTDHRVEQGESHLPL</sequence>
<organism>
    <name type="scientific">Schizosaccharomyces pombe (strain 972 / ATCC 24843)</name>
    <name type="common">Fission yeast</name>
    <dbReference type="NCBI Taxonomy" id="284812"/>
    <lineage>
        <taxon>Eukaryota</taxon>
        <taxon>Fungi</taxon>
        <taxon>Dikarya</taxon>
        <taxon>Ascomycota</taxon>
        <taxon>Taphrinomycotina</taxon>
        <taxon>Schizosaccharomycetes</taxon>
        <taxon>Schizosaccharomycetales</taxon>
        <taxon>Schizosaccharomycetaceae</taxon>
        <taxon>Schizosaccharomyces</taxon>
    </lineage>
</organism>
<accession>Q10410</accession>
<protein>
    <recommendedName>
        <fullName>Probable ADP-ribosylation factor-binding protein C1F3.05</fullName>
    </recommendedName>
</protein>
<name>YD85_SCHPO</name>
<feature type="chain" id="PRO_0000212688" description="Probable ADP-ribosylation factor-binding protein C1F3.05">
    <location>
        <begin position="1"/>
        <end position="510"/>
    </location>
</feature>
<feature type="domain" description="VHS" evidence="3">
    <location>
        <begin position="14"/>
        <end position="150"/>
    </location>
</feature>
<feature type="domain" description="GAT" evidence="4">
    <location>
        <begin position="177"/>
        <end position="301"/>
    </location>
</feature>
<feature type="domain" description="GAE" evidence="2">
    <location>
        <begin position="391"/>
        <end position="510"/>
    </location>
</feature>
<comment type="function">
    <text evidence="1">May play a role in the regulation of membrane traffic through the trans-Golgi network.</text>
</comment>
<comment type="subcellular location">
    <subcellularLocation>
        <location evidence="1">Golgi apparatus</location>
        <location evidence="1">trans-Golgi network</location>
    </subcellularLocation>
</comment>